<protein>
    <recommendedName>
        <fullName evidence="1">Large ribosomal subunit protein uL5</fullName>
    </recommendedName>
    <alternativeName>
        <fullName evidence="2">50S ribosomal protein L5</fullName>
    </alternativeName>
</protein>
<gene>
    <name evidence="1" type="primary">rpl5</name>
    <name type="ordered locus">Maeo_1397</name>
</gene>
<dbReference type="EMBL" id="CP000743">
    <property type="protein sequence ID" value="ABR56973.1"/>
    <property type="molecule type" value="Genomic_DNA"/>
</dbReference>
<dbReference type="RefSeq" id="WP_011974105.1">
    <property type="nucleotide sequence ID" value="NC_009635.1"/>
</dbReference>
<dbReference type="SMR" id="A6UWV1"/>
<dbReference type="STRING" id="419665.Maeo_1397"/>
<dbReference type="GeneID" id="5327233"/>
<dbReference type="KEGG" id="mae:Maeo_1397"/>
<dbReference type="eggNOG" id="arCOG04092">
    <property type="taxonomic scope" value="Archaea"/>
</dbReference>
<dbReference type="HOGENOM" id="CLU_061015_3_0_2"/>
<dbReference type="OrthoDB" id="372044at2157"/>
<dbReference type="Proteomes" id="UP000001106">
    <property type="component" value="Chromosome"/>
</dbReference>
<dbReference type="GO" id="GO:1990904">
    <property type="term" value="C:ribonucleoprotein complex"/>
    <property type="evidence" value="ECO:0007669"/>
    <property type="project" value="UniProtKB-KW"/>
</dbReference>
<dbReference type="GO" id="GO:0005840">
    <property type="term" value="C:ribosome"/>
    <property type="evidence" value="ECO:0007669"/>
    <property type="project" value="UniProtKB-KW"/>
</dbReference>
<dbReference type="GO" id="GO:0019843">
    <property type="term" value="F:rRNA binding"/>
    <property type="evidence" value="ECO:0007669"/>
    <property type="project" value="UniProtKB-UniRule"/>
</dbReference>
<dbReference type="GO" id="GO:0003735">
    <property type="term" value="F:structural constituent of ribosome"/>
    <property type="evidence" value="ECO:0007669"/>
    <property type="project" value="InterPro"/>
</dbReference>
<dbReference type="GO" id="GO:0000049">
    <property type="term" value="F:tRNA binding"/>
    <property type="evidence" value="ECO:0007669"/>
    <property type="project" value="UniProtKB-UniRule"/>
</dbReference>
<dbReference type="GO" id="GO:0006412">
    <property type="term" value="P:translation"/>
    <property type="evidence" value="ECO:0007669"/>
    <property type="project" value="UniProtKB-UniRule"/>
</dbReference>
<dbReference type="FunFam" id="3.30.1440.10:FF:000002">
    <property type="entry name" value="60S ribosomal protein L11"/>
    <property type="match status" value="1"/>
</dbReference>
<dbReference type="Gene3D" id="3.30.1440.10">
    <property type="match status" value="1"/>
</dbReference>
<dbReference type="HAMAP" id="MF_01333_A">
    <property type="entry name" value="Ribosomal_uL5_A"/>
    <property type="match status" value="1"/>
</dbReference>
<dbReference type="InterPro" id="IPR002132">
    <property type="entry name" value="Ribosomal_uL5"/>
</dbReference>
<dbReference type="InterPro" id="IPR022804">
    <property type="entry name" value="Ribosomal_uL5_arc"/>
</dbReference>
<dbReference type="InterPro" id="IPR031309">
    <property type="entry name" value="Ribosomal_uL5_C"/>
</dbReference>
<dbReference type="InterPro" id="IPR020929">
    <property type="entry name" value="Ribosomal_uL5_CS"/>
</dbReference>
<dbReference type="InterPro" id="IPR022803">
    <property type="entry name" value="Ribosomal_uL5_dom_sf"/>
</dbReference>
<dbReference type="InterPro" id="IPR031310">
    <property type="entry name" value="Ribosomal_uL5_N"/>
</dbReference>
<dbReference type="NCBIfam" id="NF003258">
    <property type="entry name" value="PRK04219.1"/>
    <property type="match status" value="1"/>
</dbReference>
<dbReference type="PANTHER" id="PTHR11994">
    <property type="entry name" value="60S RIBOSOMAL PROTEIN L11-RELATED"/>
    <property type="match status" value="1"/>
</dbReference>
<dbReference type="Pfam" id="PF00281">
    <property type="entry name" value="Ribosomal_L5"/>
    <property type="match status" value="1"/>
</dbReference>
<dbReference type="Pfam" id="PF00673">
    <property type="entry name" value="Ribosomal_L5_C"/>
    <property type="match status" value="1"/>
</dbReference>
<dbReference type="PIRSF" id="PIRSF002161">
    <property type="entry name" value="Ribosomal_L5"/>
    <property type="match status" value="1"/>
</dbReference>
<dbReference type="SUPFAM" id="SSF55282">
    <property type="entry name" value="RL5-like"/>
    <property type="match status" value="1"/>
</dbReference>
<dbReference type="PROSITE" id="PS00358">
    <property type="entry name" value="RIBOSOMAL_L5"/>
    <property type="match status" value="1"/>
</dbReference>
<feature type="chain" id="PRO_1000052768" description="Large ribosomal subunit protein uL5">
    <location>
        <begin position="1"/>
        <end position="181"/>
    </location>
</feature>
<sequence>MNFQEAWEKQPMSKPRIEKVTVNMGVGESGDKLLTAEKVVSEITGQKPVRTLAKQTNPAFNIRKKLPIGLKITLRGKKAEEFLKDAFTAFTASGKQLFTYSFDKRGNFSFGIPEHIDFPNQKYDPSVGIYGMDICVTFEKPGYSVKRRKAKRANIPAKHLVSKEEAINYIETIYGIKVEQE</sequence>
<reference key="1">
    <citation type="submission" date="2007-06" db="EMBL/GenBank/DDBJ databases">
        <title>Complete sequence of Methanococcus aeolicus Nankai-3.</title>
        <authorList>
            <consortium name="US DOE Joint Genome Institute"/>
            <person name="Copeland A."/>
            <person name="Lucas S."/>
            <person name="Lapidus A."/>
            <person name="Barry K."/>
            <person name="Glavina del Rio T."/>
            <person name="Dalin E."/>
            <person name="Tice H."/>
            <person name="Pitluck S."/>
            <person name="Chain P."/>
            <person name="Malfatti S."/>
            <person name="Shin M."/>
            <person name="Vergez L."/>
            <person name="Schmutz J."/>
            <person name="Larimer F."/>
            <person name="Land M."/>
            <person name="Hauser L."/>
            <person name="Kyrpides N."/>
            <person name="Lykidis A."/>
            <person name="Sieprawska-Lupa M."/>
            <person name="Whitman W.B."/>
            <person name="Richardson P."/>
        </authorList>
    </citation>
    <scope>NUCLEOTIDE SEQUENCE [LARGE SCALE GENOMIC DNA]</scope>
    <source>
        <strain>ATCC BAA-1280 / DSM 17508 / OCM 812 / Nankai-3</strain>
    </source>
</reference>
<accession>A6UWV1</accession>
<comment type="function">
    <text evidence="1">This is one of the proteins that bind and probably mediate the attachment of the 5S RNA into the large ribosomal subunit, where it forms part of the central protuberance. In the 70S ribosome it contacts protein S13 of the 30S subunit (bridge B1b), connecting the 2 subunits; this bridge is implicated in subunit movement. May contact the P site tRNA; the 5S rRNA and some of its associated proteins might help stabilize positioning of ribosome-bound tRNAs.</text>
</comment>
<comment type="subunit">
    <text evidence="1">Part of the 50S ribosomal subunit; contacts the 5S rRNA and probably tRNA. Forms a bridge to the 30S subunit in the 70S ribosome.</text>
</comment>
<comment type="similarity">
    <text evidence="1">Belongs to the universal ribosomal protein uL5 family.</text>
</comment>
<proteinExistence type="inferred from homology"/>
<keyword id="KW-0687">Ribonucleoprotein</keyword>
<keyword id="KW-0689">Ribosomal protein</keyword>
<keyword id="KW-0694">RNA-binding</keyword>
<keyword id="KW-0699">rRNA-binding</keyword>
<keyword id="KW-0820">tRNA-binding</keyword>
<organism>
    <name type="scientific">Methanococcus aeolicus (strain ATCC BAA-1280 / DSM 17508 / OCM 812 / Nankai-3)</name>
    <dbReference type="NCBI Taxonomy" id="419665"/>
    <lineage>
        <taxon>Archaea</taxon>
        <taxon>Methanobacteriati</taxon>
        <taxon>Methanobacteriota</taxon>
        <taxon>Methanomada group</taxon>
        <taxon>Methanococci</taxon>
        <taxon>Methanococcales</taxon>
        <taxon>Methanococcaceae</taxon>
        <taxon>Methanococcus</taxon>
    </lineage>
</organism>
<name>RL5_META3</name>
<evidence type="ECO:0000255" key="1">
    <source>
        <dbReference type="HAMAP-Rule" id="MF_01333"/>
    </source>
</evidence>
<evidence type="ECO:0000305" key="2"/>